<protein>
    <recommendedName>
        <fullName evidence="1">Pantothenate synthetase</fullName>
        <shortName evidence="1">PS</shortName>
        <ecNumber evidence="1">6.3.2.1</ecNumber>
    </recommendedName>
    <alternativeName>
        <fullName evidence="1">Pantoate--beta-alanine ligase</fullName>
    </alternativeName>
    <alternativeName>
        <fullName evidence="1">Pantoate-activating enzyme</fullName>
    </alternativeName>
</protein>
<evidence type="ECO:0000255" key="1">
    <source>
        <dbReference type="HAMAP-Rule" id="MF_00158"/>
    </source>
</evidence>
<feature type="chain" id="PRO_0000305398" description="Pantothenate synthetase">
    <location>
        <begin position="1"/>
        <end position="282"/>
    </location>
</feature>
<feature type="active site" description="Proton donor" evidence="1">
    <location>
        <position position="37"/>
    </location>
</feature>
<feature type="binding site" evidence="1">
    <location>
        <begin position="30"/>
        <end position="37"/>
    </location>
    <ligand>
        <name>ATP</name>
        <dbReference type="ChEBI" id="CHEBI:30616"/>
    </ligand>
</feature>
<feature type="binding site" evidence="1">
    <location>
        <position position="61"/>
    </location>
    <ligand>
        <name>(R)-pantoate</name>
        <dbReference type="ChEBI" id="CHEBI:15980"/>
    </ligand>
</feature>
<feature type="binding site" evidence="1">
    <location>
        <position position="61"/>
    </location>
    <ligand>
        <name>beta-alanine</name>
        <dbReference type="ChEBI" id="CHEBI:57966"/>
    </ligand>
</feature>
<feature type="binding site" evidence="1">
    <location>
        <begin position="147"/>
        <end position="150"/>
    </location>
    <ligand>
        <name>ATP</name>
        <dbReference type="ChEBI" id="CHEBI:30616"/>
    </ligand>
</feature>
<feature type="binding site" evidence="1">
    <location>
        <position position="153"/>
    </location>
    <ligand>
        <name>(R)-pantoate</name>
        <dbReference type="ChEBI" id="CHEBI:15980"/>
    </ligand>
</feature>
<feature type="binding site" evidence="1">
    <location>
        <position position="176"/>
    </location>
    <ligand>
        <name>ATP</name>
        <dbReference type="ChEBI" id="CHEBI:30616"/>
    </ligand>
</feature>
<feature type="binding site" evidence="1">
    <location>
        <begin position="184"/>
        <end position="187"/>
    </location>
    <ligand>
        <name>ATP</name>
        <dbReference type="ChEBI" id="CHEBI:30616"/>
    </ligand>
</feature>
<keyword id="KW-0067">ATP-binding</keyword>
<keyword id="KW-0963">Cytoplasm</keyword>
<keyword id="KW-0436">Ligase</keyword>
<keyword id="KW-0547">Nucleotide-binding</keyword>
<keyword id="KW-0566">Pantothenate biosynthesis</keyword>
<gene>
    <name evidence="1" type="primary">panC</name>
    <name type="ordered locus">BF1003</name>
</gene>
<name>PANC_BACFR</name>
<comment type="function">
    <text evidence="1">Catalyzes the condensation of pantoate with beta-alanine in an ATP-dependent reaction via a pantoyl-adenylate intermediate.</text>
</comment>
<comment type="catalytic activity">
    <reaction evidence="1">
        <text>(R)-pantoate + beta-alanine + ATP = (R)-pantothenate + AMP + diphosphate + H(+)</text>
        <dbReference type="Rhea" id="RHEA:10912"/>
        <dbReference type="ChEBI" id="CHEBI:15378"/>
        <dbReference type="ChEBI" id="CHEBI:15980"/>
        <dbReference type="ChEBI" id="CHEBI:29032"/>
        <dbReference type="ChEBI" id="CHEBI:30616"/>
        <dbReference type="ChEBI" id="CHEBI:33019"/>
        <dbReference type="ChEBI" id="CHEBI:57966"/>
        <dbReference type="ChEBI" id="CHEBI:456215"/>
        <dbReference type="EC" id="6.3.2.1"/>
    </reaction>
</comment>
<comment type="pathway">
    <text evidence="1">Cofactor biosynthesis; (R)-pantothenate biosynthesis; (R)-pantothenate from (R)-pantoate and beta-alanine: step 1/1.</text>
</comment>
<comment type="subunit">
    <text evidence="1">Homodimer.</text>
</comment>
<comment type="subcellular location">
    <subcellularLocation>
        <location evidence="1">Cytoplasm</location>
    </subcellularLocation>
</comment>
<comment type="miscellaneous">
    <text evidence="1">The reaction proceeds by a bi uni uni bi ping pong mechanism.</text>
</comment>
<comment type="similarity">
    <text evidence="1">Belongs to the pantothenate synthetase family.</text>
</comment>
<dbReference type="EC" id="6.3.2.1" evidence="1"/>
<dbReference type="EMBL" id="AP006841">
    <property type="protein sequence ID" value="BAD47753.1"/>
    <property type="molecule type" value="Genomic_DNA"/>
</dbReference>
<dbReference type="RefSeq" id="WP_011202230.1">
    <property type="nucleotide sequence ID" value="NC_006347.1"/>
</dbReference>
<dbReference type="RefSeq" id="YP_098287.1">
    <property type="nucleotide sequence ID" value="NC_006347.1"/>
</dbReference>
<dbReference type="SMR" id="Q64XM3"/>
<dbReference type="STRING" id="295405.BF1003"/>
<dbReference type="KEGG" id="bfr:BF1003"/>
<dbReference type="PATRIC" id="fig|295405.11.peg.1002"/>
<dbReference type="HOGENOM" id="CLU_047148_0_0_10"/>
<dbReference type="OrthoDB" id="9773087at2"/>
<dbReference type="UniPathway" id="UPA00028">
    <property type="reaction ID" value="UER00005"/>
</dbReference>
<dbReference type="Proteomes" id="UP000002197">
    <property type="component" value="Chromosome"/>
</dbReference>
<dbReference type="GO" id="GO:0005829">
    <property type="term" value="C:cytosol"/>
    <property type="evidence" value="ECO:0007669"/>
    <property type="project" value="TreeGrafter"/>
</dbReference>
<dbReference type="GO" id="GO:0005524">
    <property type="term" value="F:ATP binding"/>
    <property type="evidence" value="ECO:0007669"/>
    <property type="project" value="UniProtKB-KW"/>
</dbReference>
<dbReference type="GO" id="GO:0004592">
    <property type="term" value="F:pantoate-beta-alanine ligase activity"/>
    <property type="evidence" value="ECO:0007669"/>
    <property type="project" value="UniProtKB-UniRule"/>
</dbReference>
<dbReference type="GO" id="GO:0015940">
    <property type="term" value="P:pantothenate biosynthetic process"/>
    <property type="evidence" value="ECO:0007669"/>
    <property type="project" value="UniProtKB-UniRule"/>
</dbReference>
<dbReference type="CDD" id="cd00560">
    <property type="entry name" value="PanC"/>
    <property type="match status" value="1"/>
</dbReference>
<dbReference type="FunFam" id="3.40.50.620:FF:000013">
    <property type="entry name" value="Pantothenate synthetase"/>
    <property type="match status" value="1"/>
</dbReference>
<dbReference type="Gene3D" id="3.40.50.620">
    <property type="entry name" value="HUPs"/>
    <property type="match status" value="1"/>
</dbReference>
<dbReference type="Gene3D" id="3.30.1300.10">
    <property type="entry name" value="Pantoate-beta-alanine ligase, C-terminal domain"/>
    <property type="match status" value="1"/>
</dbReference>
<dbReference type="HAMAP" id="MF_00158">
    <property type="entry name" value="PanC"/>
    <property type="match status" value="1"/>
</dbReference>
<dbReference type="InterPro" id="IPR003721">
    <property type="entry name" value="Pantoate_ligase"/>
</dbReference>
<dbReference type="InterPro" id="IPR042176">
    <property type="entry name" value="Pantoate_ligase_C"/>
</dbReference>
<dbReference type="InterPro" id="IPR014729">
    <property type="entry name" value="Rossmann-like_a/b/a_fold"/>
</dbReference>
<dbReference type="NCBIfam" id="TIGR00018">
    <property type="entry name" value="panC"/>
    <property type="match status" value="1"/>
</dbReference>
<dbReference type="PANTHER" id="PTHR21299">
    <property type="entry name" value="CYTIDYLATE KINASE/PANTOATE-BETA-ALANINE LIGASE"/>
    <property type="match status" value="1"/>
</dbReference>
<dbReference type="PANTHER" id="PTHR21299:SF1">
    <property type="entry name" value="PANTOATE--BETA-ALANINE LIGASE"/>
    <property type="match status" value="1"/>
</dbReference>
<dbReference type="Pfam" id="PF02569">
    <property type="entry name" value="Pantoate_ligase"/>
    <property type="match status" value="1"/>
</dbReference>
<dbReference type="SUPFAM" id="SSF52374">
    <property type="entry name" value="Nucleotidylyl transferase"/>
    <property type="match status" value="1"/>
</dbReference>
<reference key="1">
    <citation type="journal article" date="2004" name="Proc. Natl. Acad. Sci. U.S.A.">
        <title>Genomic analysis of Bacteroides fragilis reveals extensive DNA inversions regulating cell surface adaptation.</title>
        <authorList>
            <person name="Kuwahara T."/>
            <person name="Yamashita A."/>
            <person name="Hirakawa H."/>
            <person name="Nakayama H."/>
            <person name="Toh H."/>
            <person name="Okada N."/>
            <person name="Kuhara S."/>
            <person name="Hattori M."/>
            <person name="Hayashi T."/>
            <person name="Ohnishi Y."/>
        </authorList>
    </citation>
    <scope>NUCLEOTIDE SEQUENCE [LARGE SCALE GENOMIC DNA]</scope>
    <source>
        <strain>YCH46</strain>
    </source>
</reference>
<sequence>MKVIHTIKDLQAELSVLKAQGKKVGLVPTMGALHAGHASLVKRSVNENEVTVVSVFVNPTQFNDKNDLVKYPRTLDADCKLLEACGATYAFAPSVEEMYPEPDTRQFSYAPLDTVMEGAFRPGHFNGVCQIVSKLFEAVKPHRAYFGEKDFQQLAIIREMVRQMQFDLEIVGCPIVREEDGLALSSRNARLSAEERENALKISQTLFKSRTFAATHTVSETLKFVEDAITAVPGLRLEYFEIVDGNTLQKVDNWNQTSYVVGCITVFCGDVRLIDNIKYKES</sequence>
<accession>Q64XM3</accession>
<organism>
    <name type="scientific">Bacteroides fragilis (strain YCH46)</name>
    <dbReference type="NCBI Taxonomy" id="295405"/>
    <lineage>
        <taxon>Bacteria</taxon>
        <taxon>Pseudomonadati</taxon>
        <taxon>Bacteroidota</taxon>
        <taxon>Bacteroidia</taxon>
        <taxon>Bacteroidales</taxon>
        <taxon>Bacteroidaceae</taxon>
        <taxon>Bacteroides</taxon>
    </lineage>
</organism>
<proteinExistence type="inferred from homology"/>